<gene>
    <name evidence="5" type="primary">Lrrc39</name>
</gene>
<keyword id="KW-0963">Cytoplasm</keyword>
<keyword id="KW-0433">Leucine-rich repeat</keyword>
<keyword id="KW-0514">Muscle protein</keyword>
<keyword id="KW-1185">Reference proteome</keyword>
<keyword id="KW-0677">Repeat</keyword>
<name>LRC39_MOUSE</name>
<proteinExistence type="evidence at protein level"/>
<protein>
    <recommendedName>
        <fullName evidence="4">Leucine-rich repeat-containing protein 39</fullName>
    </recommendedName>
    <alternativeName>
        <fullName evidence="1">Myosin-interacting M-band-associated stress-responsive protein</fullName>
        <shortName evidence="1">Myomasp</shortName>
    </alternativeName>
</protein>
<dbReference type="EMBL" id="AK039277">
    <property type="protein sequence ID" value="BAC30303.1"/>
    <property type="molecule type" value="mRNA"/>
</dbReference>
<dbReference type="EMBL" id="AK052159">
    <property type="protein sequence ID" value="BAC34863.1"/>
    <property type="molecule type" value="mRNA"/>
</dbReference>
<dbReference type="EMBL" id="AK079125">
    <property type="protein sequence ID" value="BAC37551.1"/>
    <property type="molecule type" value="mRNA"/>
</dbReference>
<dbReference type="CCDS" id="CCDS17788.1"/>
<dbReference type="RefSeq" id="NP_780622.1">
    <property type="nucleotide sequence ID" value="NM_175413.4"/>
</dbReference>
<dbReference type="SMR" id="Q8BGI7"/>
<dbReference type="FunCoup" id="Q8BGI7">
    <property type="interactions" value="5"/>
</dbReference>
<dbReference type="STRING" id="10090.ENSMUSP00000029573"/>
<dbReference type="iPTMnet" id="Q8BGI7"/>
<dbReference type="PhosphoSitePlus" id="Q8BGI7"/>
<dbReference type="PaxDb" id="10090-ENSMUSP00000029573"/>
<dbReference type="ProteomicsDB" id="252506"/>
<dbReference type="Pumba" id="Q8BGI7"/>
<dbReference type="Antibodypedia" id="33693">
    <property type="antibodies" value="180 antibodies from 19 providers"/>
</dbReference>
<dbReference type="DNASU" id="109245"/>
<dbReference type="Ensembl" id="ENSMUST00000029573.8">
    <property type="protein sequence ID" value="ENSMUSP00000029573.6"/>
    <property type="gene ID" value="ENSMUSG00000027961.8"/>
</dbReference>
<dbReference type="GeneID" id="109245"/>
<dbReference type="KEGG" id="mmu:109245"/>
<dbReference type="UCSC" id="uc008rci.2">
    <property type="organism name" value="mouse"/>
</dbReference>
<dbReference type="AGR" id="MGI:1924557"/>
<dbReference type="CTD" id="127495"/>
<dbReference type="MGI" id="MGI:1924557">
    <property type="gene designation" value="Lrrc39"/>
</dbReference>
<dbReference type="VEuPathDB" id="HostDB:ENSMUSG00000027961"/>
<dbReference type="eggNOG" id="KOG0619">
    <property type="taxonomic scope" value="Eukaryota"/>
</dbReference>
<dbReference type="GeneTree" id="ENSGT00940000158998"/>
<dbReference type="HOGENOM" id="CLU_000288_18_8_1"/>
<dbReference type="InParanoid" id="Q8BGI7"/>
<dbReference type="OMA" id="DMPALEW"/>
<dbReference type="OrthoDB" id="442066at2759"/>
<dbReference type="PhylomeDB" id="Q8BGI7"/>
<dbReference type="TreeFam" id="TF333627"/>
<dbReference type="BioGRID-ORCS" id="109245">
    <property type="hits" value="2 hits in 76 CRISPR screens"/>
</dbReference>
<dbReference type="ChiTaRS" id="Lrrc39">
    <property type="organism name" value="mouse"/>
</dbReference>
<dbReference type="PRO" id="PR:Q8BGI7"/>
<dbReference type="Proteomes" id="UP000000589">
    <property type="component" value="Chromosome 3"/>
</dbReference>
<dbReference type="RNAct" id="Q8BGI7">
    <property type="molecule type" value="protein"/>
</dbReference>
<dbReference type="Bgee" id="ENSMUSG00000027961">
    <property type="expression patterns" value="Expressed in soleus muscle and 88 other cell types or tissues"/>
</dbReference>
<dbReference type="ExpressionAtlas" id="Q8BGI7">
    <property type="expression patterns" value="baseline and differential"/>
</dbReference>
<dbReference type="GO" id="GO:0031430">
    <property type="term" value="C:M band"/>
    <property type="evidence" value="ECO:0007669"/>
    <property type="project" value="UniProtKB-SubCell"/>
</dbReference>
<dbReference type="FunFam" id="3.80.10.10:FF:000248">
    <property type="entry name" value="Leucine rich repeat containing 39"/>
    <property type="match status" value="1"/>
</dbReference>
<dbReference type="FunFam" id="3.80.10.10:FF:000249">
    <property type="entry name" value="Leucine rich repeat containing 39"/>
    <property type="match status" value="1"/>
</dbReference>
<dbReference type="Gene3D" id="3.80.10.10">
    <property type="entry name" value="Ribonuclease Inhibitor"/>
    <property type="match status" value="2"/>
</dbReference>
<dbReference type="InterPro" id="IPR001611">
    <property type="entry name" value="Leu-rich_rpt"/>
</dbReference>
<dbReference type="InterPro" id="IPR003591">
    <property type="entry name" value="Leu-rich_rpt_typical-subtyp"/>
</dbReference>
<dbReference type="InterPro" id="IPR032675">
    <property type="entry name" value="LRR_dom_sf"/>
</dbReference>
<dbReference type="InterPro" id="IPR050216">
    <property type="entry name" value="LRR_domain-containing"/>
</dbReference>
<dbReference type="InterPro" id="IPR055414">
    <property type="entry name" value="LRR_R13L4/SHOC2-like"/>
</dbReference>
<dbReference type="PANTHER" id="PTHR48051">
    <property type="match status" value="1"/>
</dbReference>
<dbReference type="PANTHER" id="PTHR48051:SF2">
    <property type="entry name" value="LEUCINE RICH REPEAT CONTAINING 39"/>
    <property type="match status" value="1"/>
</dbReference>
<dbReference type="Pfam" id="PF23598">
    <property type="entry name" value="LRR_14"/>
    <property type="match status" value="1"/>
</dbReference>
<dbReference type="Pfam" id="PF13855">
    <property type="entry name" value="LRR_8"/>
    <property type="match status" value="1"/>
</dbReference>
<dbReference type="SMART" id="SM00369">
    <property type="entry name" value="LRR_TYP"/>
    <property type="match status" value="6"/>
</dbReference>
<dbReference type="SUPFAM" id="SSF52058">
    <property type="entry name" value="L domain-like"/>
    <property type="match status" value="1"/>
</dbReference>
<dbReference type="PROSITE" id="PS51450">
    <property type="entry name" value="LRR"/>
    <property type="match status" value="7"/>
</dbReference>
<comment type="function">
    <text evidence="1">Component of the sarcomeric M-band which plays a role in myocyte response to biomechanical stress. May regulate expression of other M-band proteins via an SRF-dependent pathway. Important for normal contractile function in heart.</text>
</comment>
<comment type="subunit">
    <text evidence="2">Interacts with MYH7 (via C-terminus).</text>
</comment>
<comment type="subcellular location">
    <subcellularLocation>
        <location evidence="1">Cytoplasm</location>
        <location evidence="1">Myofibril</location>
        <location evidence="1">Sarcomere</location>
        <location evidence="1">M line</location>
    </subcellularLocation>
</comment>
<comment type="tissue specificity">
    <text evidence="3">Expressed in heart and skeletal muscle.</text>
</comment>
<organism>
    <name type="scientific">Mus musculus</name>
    <name type="common">Mouse</name>
    <dbReference type="NCBI Taxonomy" id="10090"/>
    <lineage>
        <taxon>Eukaryota</taxon>
        <taxon>Metazoa</taxon>
        <taxon>Chordata</taxon>
        <taxon>Craniata</taxon>
        <taxon>Vertebrata</taxon>
        <taxon>Euteleostomi</taxon>
        <taxon>Mammalia</taxon>
        <taxon>Eutheria</taxon>
        <taxon>Euarchontoglires</taxon>
        <taxon>Glires</taxon>
        <taxon>Rodentia</taxon>
        <taxon>Myomorpha</taxon>
        <taxon>Muroidea</taxon>
        <taxon>Muridae</taxon>
        <taxon>Murinae</taxon>
        <taxon>Mus</taxon>
        <taxon>Mus</taxon>
    </lineage>
</organism>
<sequence>MTESAVCTGAVSAVKEVWEERIKKHHEDVKREKEFQHKLVRIWEDRVSLTKLKEKVTREDGRVILRIEKEEWKTLPSSLLKLNQLQEWQLHRTGLLKIPEFIGRFQHLIVLDLSRNTISEIPRGIGLLTRLQELILSYNKIKTVPKELSNCTSLEKLELAVNRDISDLPPELSKLLKLTHLDLSMNQFTTIPHAVLDMPALEWLDMGSNSLQQLPDSLDRMRSLHTLWLQRNEITCLPETIKNMKNLGTLVLSNNKLQDIPGCMEEMTNLRFVNFRDNPLRLEVTLPPSDNTDGEEEQELFGLQFMHAYIQESRRTEDQVNCLTQMPSSIHSDGESN</sequence>
<feature type="chain" id="PRO_0000232581" description="Leucine-rich repeat-containing protein 39">
    <location>
        <begin position="1"/>
        <end position="337"/>
    </location>
</feature>
<feature type="repeat" description="LRR 1">
    <location>
        <begin position="84"/>
        <end position="105"/>
    </location>
</feature>
<feature type="repeat" description="LRR 2">
    <location>
        <begin position="107"/>
        <end position="128"/>
    </location>
</feature>
<feature type="repeat" description="LRR 3">
    <location>
        <begin position="130"/>
        <end position="152"/>
    </location>
</feature>
<feature type="repeat" description="LRR 4">
    <location>
        <begin position="153"/>
        <end position="176"/>
    </location>
</feature>
<feature type="repeat" description="LRR 5">
    <location>
        <begin position="177"/>
        <end position="198"/>
    </location>
</feature>
<feature type="repeat" description="LRR 6">
    <location>
        <begin position="200"/>
        <end position="221"/>
    </location>
</feature>
<feature type="repeat" description="LRR 7">
    <location>
        <begin position="223"/>
        <end position="244"/>
    </location>
</feature>
<feature type="repeat" description="LRR 8">
    <location>
        <begin position="246"/>
        <end position="267"/>
    </location>
</feature>
<feature type="repeat" description="LRR 9">
    <location>
        <begin position="269"/>
        <end position="290"/>
    </location>
</feature>
<accession>Q8BGI7</accession>
<evidence type="ECO:0000250" key="1">
    <source>
        <dbReference type="UniProtKB" id="D3ZXS4"/>
    </source>
</evidence>
<evidence type="ECO:0000250" key="2">
    <source>
        <dbReference type="UniProtKB" id="Q96DD0"/>
    </source>
</evidence>
<evidence type="ECO:0000269" key="3">
    <source>
    </source>
</evidence>
<evidence type="ECO:0000305" key="4"/>
<evidence type="ECO:0000312" key="5">
    <source>
        <dbReference type="MGI" id="MGI:1924557"/>
    </source>
</evidence>
<reference key="1">
    <citation type="journal article" date="2005" name="Science">
        <title>The transcriptional landscape of the mammalian genome.</title>
        <authorList>
            <person name="Carninci P."/>
            <person name="Kasukawa T."/>
            <person name="Katayama S."/>
            <person name="Gough J."/>
            <person name="Frith M.C."/>
            <person name="Maeda N."/>
            <person name="Oyama R."/>
            <person name="Ravasi T."/>
            <person name="Lenhard B."/>
            <person name="Wells C."/>
            <person name="Kodzius R."/>
            <person name="Shimokawa K."/>
            <person name="Bajic V.B."/>
            <person name="Brenner S.E."/>
            <person name="Batalov S."/>
            <person name="Forrest A.R."/>
            <person name="Zavolan M."/>
            <person name="Davis M.J."/>
            <person name="Wilming L.G."/>
            <person name="Aidinis V."/>
            <person name="Allen J.E."/>
            <person name="Ambesi-Impiombato A."/>
            <person name="Apweiler R."/>
            <person name="Aturaliya R.N."/>
            <person name="Bailey T.L."/>
            <person name="Bansal M."/>
            <person name="Baxter L."/>
            <person name="Beisel K.W."/>
            <person name="Bersano T."/>
            <person name="Bono H."/>
            <person name="Chalk A.M."/>
            <person name="Chiu K.P."/>
            <person name="Choudhary V."/>
            <person name="Christoffels A."/>
            <person name="Clutterbuck D.R."/>
            <person name="Crowe M.L."/>
            <person name="Dalla E."/>
            <person name="Dalrymple B.P."/>
            <person name="de Bono B."/>
            <person name="Della Gatta G."/>
            <person name="di Bernardo D."/>
            <person name="Down T."/>
            <person name="Engstrom P."/>
            <person name="Fagiolini M."/>
            <person name="Faulkner G."/>
            <person name="Fletcher C.F."/>
            <person name="Fukushima T."/>
            <person name="Furuno M."/>
            <person name="Futaki S."/>
            <person name="Gariboldi M."/>
            <person name="Georgii-Hemming P."/>
            <person name="Gingeras T.R."/>
            <person name="Gojobori T."/>
            <person name="Green R.E."/>
            <person name="Gustincich S."/>
            <person name="Harbers M."/>
            <person name="Hayashi Y."/>
            <person name="Hensch T.K."/>
            <person name="Hirokawa N."/>
            <person name="Hill D."/>
            <person name="Huminiecki L."/>
            <person name="Iacono M."/>
            <person name="Ikeo K."/>
            <person name="Iwama A."/>
            <person name="Ishikawa T."/>
            <person name="Jakt M."/>
            <person name="Kanapin A."/>
            <person name="Katoh M."/>
            <person name="Kawasawa Y."/>
            <person name="Kelso J."/>
            <person name="Kitamura H."/>
            <person name="Kitano H."/>
            <person name="Kollias G."/>
            <person name="Krishnan S.P."/>
            <person name="Kruger A."/>
            <person name="Kummerfeld S.K."/>
            <person name="Kurochkin I.V."/>
            <person name="Lareau L.F."/>
            <person name="Lazarevic D."/>
            <person name="Lipovich L."/>
            <person name="Liu J."/>
            <person name="Liuni S."/>
            <person name="McWilliam S."/>
            <person name="Madan Babu M."/>
            <person name="Madera M."/>
            <person name="Marchionni L."/>
            <person name="Matsuda H."/>
            <person name="Matsuzawa S."/>
            <person name="Miki H."/>
            <person name="Mignone F."/>
            <person name="Miyake S."/>
            <person name="Morris K."/>
            <person name="Mottagui-Tabar S."/>
            <person name="Mulder N."/>
            <person name="Nakano N."/>
            <person name="Nakauchi H."/>
            <person name="Ng P."/>
            <person name="Nilsson R."/>
            <person name="Nishiguchi S."/>
            <person name="Nishikawa S."/>
            <person name="Nori F."/>
            <person name="Ohara O."/>
            <person name="Okazaki Y."/>
            <person name="Orlando V."/>
            <person name="Pang K.C."/>
            <person name="Pavan W.J."/>
            <person name="Pavesi G."/>
            <person name="Pesole G."/>
            <person name="Petrovsky N."/>
            <person name="Piazza S."/>
            <person name="Reed J."/>
            <person name="Reid J.F."/>
            <person name="Ring B.Z."/>
            <person name="Ringwald M."/>
            <person name="Rost B."/>
            <person name="Ruan Y."/>
            <person name="Salzberg S.L."/>
            <person name="Sandelin A."/>
            <person name="Schneider C."/>
            <person name="Schoenbach C."/>
            <person name="Sekiguchi K."/>
            <person name="Semple C.A."/>
            <person name="Seno S."/>
            <person name="Sessa L."/>
            <person name="Sheng Y."/>
            <person name="Shibata Y."/>
            <person name="Shimada H."/>
            <person name="Shimada K."/>
            <person name="Silva D."/>
            <person name="Sinclair B."/>
            <person name="Sperling S."/>
            <person name="Stupka E."/>
            <person name="Sugiura K."/>
            <person name="Sultana R."/>
            <person name="Takenaka Y."/>
            <person name="Taki K."/>
            <person name="Tammoja K."/>
            <person name="Tan S.L."/>
            <person name="Tang S."/>
            <person name="Taylor M.S."/>
            <person name="Tegner J."/>
            <person name="Teichmann S.A."/>
            <person name="Ueda H.R."/>
            <person name="van Nimwegen E."/>
            <person name="Verardo R."/>
            <person name="Wei C.L."/>
            <person name="Yagi K."/>
            <person name="Yamanishi H."/>
            <person name="Zabarovsky E."/>
            <person name="Zhu S."/>
            <person name="Zimmer A."/>
            <person name="Hide W."/>
            <person name="Bult C."/>
            <person name="Grimmond S.M."/>
            <person name="Teasdale R.D."/>
            <person name="Liu E.T."/>
            <person name="Brusic V."/>
            <person name="Quackenbush J."/>
            <person name="Wahlestedt C."/>
            <person name="Mattick J.S."/>
            <person name="Hume D.A."/>
            <person name="Kai C."/>
            <person name="Sasaki D."/>
            <person name="Tomaru Y."/>
            <person name="Fukuda S."/>
            <person name="Kanamori-Katayama M."/>
            <person name="Suzuki M."/>
            <person name="Aoki J."/>
            <person name="Arakawa T."/>
            <person name="Iida J."/>
            <person name="Imamura K."/>
            <person name="Itoh M."/>
            <person name="Kato T."/>
            <person name="Kawaji H."/>
            <person name="Kawagashira N."/>
            <person name="Kawashima T."/>
            <person name="Kojima M."/>
            <person name="Kondo S."/>
            <person name="Konno H."/>
            <person name="Nakano K."/>
            <person name="Ninomiya N."/>
            <person name="Nishio T."/>
            <person name="Okada M."/>
            <person name="Plessy C."/>
            <person name="Shibata K."/>
            <person name="Shiraki T."/>
            <person name="Suzuki S."/>
            <person name="Tagami M."/>
            <person name="Waki K."/>
            <person name="Watahiki A."/>
            <person name="Okamura-Oho Y."/>
            <person name="Suzuki H."/>
            <person name="Kawai J."/>
            <person name="Hayashizaki Y."/>
        </authorList>
    </citation>
    <scope>NUCLEOTIDE SEQUENCE [LARGE SCALE MRNA]</scope>
    <source>
        <strain>C57BL/6J</strain>
        <tissue>Embryo</tissue>
        <tissue>Embryonic heart</tissue>
        <tissue>Spinal cord</tissue>
    </source>
</reference>
<reference key="2">
    <citation type="journal article" date="2010" name="Cell">
        <title>A tissue-specific atlas of mouse protein phosphorylation and expression.</title>
        <authorList>
            <person name="Huttlin E.L."/>
            <person name="Jedrychowski M.P."/>
            <person name="Elias J.E."/>
            <person name="Goswami T."/>
            <person name="Rad R."/>
            <person name="Beausoleil S.A."/>
            <person name="Villen J."/>
            <person name="Haas W."/>
            <person name="Sowa M.E."/>
            <person name="Gygi S.P."/>
        </authorList>
    </citation>
    <scope>IDENTIFICATION BY MASS SPECTROMETRY [LARGE SCALE ANALYSIS]</scope>
    <source>
        <tissue>Heart</tissue>
    </source>
</reference>
<reference key="3">
    <citation type="journal article" date="2010" name="Circ. Res.">
        <title>Myomasp/LRRC39, a heart- and muscle-specific protein, is a novel component of the sarcomeric M-band and is involved in stretch sensing.</title>
        <authorList>
            <person name="Will R.D."/>
            <person name="Eden M."/>
            <person name="Just S."/>
            <person name="Hansen A."/>
            <person name="Eder A."/>
            <person name="Frank D."/>
            <person name="Kuhn C."/>
            <person name="Seeger T.S."/>
            <person name="Oehl U."/>
            <person name="Wiemann S."/>
            <person name="Korn B."/>
            <person name="Koegl M."/>
            <person name="Rottbauer W."/>
            <person name="Eschenhagen T."/>
            <person name="Katus H.A."/>
            <person name="Frey N."/>
        </authorList>
    </citation>
    <scope>TISSUE SPECIFICITY</scope>
</reference>